<sequence length="176" mass="20160">MLRFLNQCSQGRGAWLLMAFTALALELTALWFQHVMLLKPCVLCIYERCALFGVLGAALIGAIAPKTPLRYVAMVIWLYSAFRGVQLTYEHTMLQLYPSPFATCDFMVRFPEWLPLDKWVPQVFVASGDCAERQWDFLGMEMPQWLLGIFIAYLIVAVLVVISQPFKAKKRDLFGR</sequence>
<evidence type="ECO:0000255" key="1">
    <source>
        <dbReference type="HAMAP-Rule" id="MF_00286"/>
    </source>
</evidence>
<organism>
    <name type="scientific">Shigella flexneri serotype 5b (strain 8401)</name>
    <dbReference type="NCBI Taxonomy" id="373384"/>
    <lineage>
        <taxon>Bacteria</taxon>
        <taxon>Pseudomonadati</taxon>
        <taxon>Pseudomonadota</taxon>
        <taxon>Gammaproteobacteria</taxon>
        <taxon>Enterobacterales</taxon>
        <taxon>Enterobacteriaceae</taxon>
        <taxon>Shigella</taxon>
    </lineage>
</organism>
<comment type="function">
    <text evidence="1">Required for disulfide bond formation in some periplasmic proteins. Acts by oxidizing the DsbA protein.</text>
</comment>
<comment type="subcellular location">
    <subcellularLocation>
        <location evidence="1">Cell inner membrane</location>
        <topology evidence="1">Multi-pass membrane protein</topology>
    </subcellularLocation>
</comment>
<comment type="similarity">
    <text evidence="1">Belongs to the DsbB family.</text>
</comment>
<name>DSBB_SHIF8</name>
<dbReference type="EMBL" id="CP000266">
    <property type="protein sequence ID" value="ABF03399.1"/>
    <property type="molecule type" value="Genomic_DNA"/>
</dbReference>
<dbReference type="RefSeq" id="WP_000943462.1">
    <property type="nucleotide sequence ID" value="NC_008258.1"/>
</dbReference>
<dbReference type="BMRB" id="Q0T5L6"/>
<dbReference type="SMR" id="Q0T5L6"/>
<dbReference type="KEGG" id="sfv:SFV_1192"/>
<dbReference type="HOGENOM" id="CLU_098660_2_0_6"/>
<dbReference type="Proteomes" id="UP000000659">
    <property type="component" value="Chromosome"/>
</dbReference>
<dbReference type="GO" id="GO:0005886">
    <property type="term" value="C:plasma membrane"/>
    <property type="evidence" value="ECO:0007669"/>
    <property type="project" value="UniProtKB-SubCell"/>
</dbReference>
<dbReference type="GO" id="GO:0009055">
    <property type="term" value="F:electron transfer activity"/>
    <property type="evidence" value="ECO:0007669"/>
    <property type="project" value="UniProtKB-UniRule"/>
</dbReference>
<dbReference type="GO" id="GO:0015035">
    <property type="term" value="F:protein-disulfide reductase activity"/>
    <property type="evidence" value="ECO:0007669"/>
    <property type="project" value="UniProtKB-UniRule"/>
</dbReference>
<dbReference type="GO" id="GO:0006457">
    <property type="term" value="P:protein folding"/>
    <property type="evidence" value="ECO:0007669"/>
    <property type="project" value="InterPro"/>
</dbReference>
<dbReference type="FunFam" id="1.20.1550.10:FF:000001">
    <property type="entry name" value="Disulfide bond formation protein B"/>
    <property type="match status" value="1"/>
</dbReference>
<dbReference type="Gene3D" id="1.20.1550.10">
    <property type="entry name" value="DsbB-like"/>
    <property type="match status" value="1"/>
</dbReference>
<dbReference type="HAMAP" id="MF_00286">
    <property type="entry name" value="DsbB"/>
    <property type="match status" value="1"/>
</dbReference>
<dbReference type="InterPro" id="IPR003752">
    <property type="entry name" value="DiS_bond_form_DsbB/BdbC"/>
</dbReference>
<dbReference type="InterPro" id="IPR022920">
    <property type="entry name" value="Disulphide_bond_form_DsbB"/>
</dbReference>
<dbReference type="InterPro" id="IPR050183">
    <property type="entry name" value="DsbB"/>
</dbReference>
<dbReference type="InterPro" id="IPR023380">
    <property type="entry name" value="DsbB-like_sf"/>
</dbReference>
<dbReference type="NCBIfam" id="NF002485">
    <property type="entry name" value="PRK01749.1"/>
    <property type="match status" value="1"/>
</dbReference>
<dbReference type="PANTHER" id="PTHR36570">
    <property type="entry name" value="DISULFIDE BOND FORMATION PROTEIN B"/>
    <property type="match status" value="1"/>
</dbReference>
<dbReference type="PANTHER" id="PTHR36570:SF2">
    <property type="entry name" value="DISULFIDE BOND FORMATION PROTEIN B"/>
    <property type="match status" value="1"/>
</dbReference>
<dbReference type="Pfam" id="PF02600">
    <property type="entry name" value="DsbB"/>
    <property type="match status" value="1"/>
</dbReference>
<dbReference type="SUPFAM" id="SSF158442">
    <property type="entry name" value="DsbB-like"/>
    <property type="match status" value="1"/>
</dbReference>
<accession>Q0T5L6</accession>
<feature type="chain" id="PRO_0000298416" description="Disulfide bond formation protein B">
    <location>
        <begin position="1"/>
        <end position="176"/>
    </location>
</feature>
<feature type="topological domain" description="Cytoplasmic" evidence="1">
    <location>
        <begin position="1"/>
        <end position="14"/>
    </location>
</feature>
<feature type="transmembrane region" description="Helical" evidence="1">
    <location>
        <begin position="15"/>
        <end position="31"/>
    </location>
</feature>
<feature type="topological domain" description="Periplasmic" evidence="1">
    <location>
        <begin position="32"/>
        <end position="49"/>
    </location>
</feature>
<feature type="transmembrane region" description="Helical" evidence="1">
    <location>
        <begin position="50"/>
        <end position="65"/>
    </location>
</feature>
<feature type="topological domain" description="Cytoplasmic" evidence="1">
    <location>
        <begin position="66"/>
        <end position="71"/>
    </location>
</feature>
<feature type="transmembrane region" description="Helical" evidence="1">
    <location>
        <begin position="72"/>
        <end position="89"/>
    </location>
</feature>
<feature type="topological domain" description="Periplasmic" evidence="1">
    <location>
        <begin position="90"/>
        <end position="144"/>
    </location>
</feature>
<feature type="transmembrane region" description="Helical" evidence="1">
    <location>
        <begin position="145"/>
        <end position="163"/>
    </location>
</feature>
<feature type="topological domain" description="Cytoplasmic" evidence="1">
    <location>
        <begin position="164"/>
        <end position="176"/>
    </location>
</feature>
<feature type="disulfide bond" description="Redox-active" evidence="1">
    <location>
        <begin position="41"/>
        <end position="44"/>
    </location>
</feature>
<feature type="disulfide bond" description="Redox-active" evidence="1">
    <location>
        <begin position="104"/>
        <end position="130"/>
    </location>
</feature>
<reference key="1">
    <citation type="journal article" date="2006" name="BMC Genomics">
        <title>Complete genome sequence of Shigella flexneri 5b and comparison with Shigella flexneri 2a.</title>
        <authorList>
            <person name="Nie H."/>
            <person name="Yang F."/>
            <person name="Zhang X."/>
            <person name="Yang J."/>
            <person name="Chen L."/>
            <person name="Wang J."/>
            <person name="Xiong Z."/>
            <person name="Peng J."/>
            <person name="Sun L."/>
            <person name="Dong J."/>
            <person name="Xue Y."/>
            <person name="Xu X."/>
            <person name="Chen S."/>
            <person name="Yao Z."/>
            <person name="Shen Y."/>
            <person name="Jin Q."/>
        </authorList>
    </citation>
    <scope>NUCLEOTIDE SEQUENCE [LARGE SCALE GENOMIC DNA]</scope>
    <source>
        <strain>8401</strain>
    </source>
</reference>
<keyword id="KW-0997">Cell inner membrane</keyword>
<keyword id="KW-1003">Cell membrane</keyword>
<keyword id="KW-0143">Chaperone</keyword>
<keyword id="KW-1015">Disulfide bond</keyword>
<keyword id="KW-0249">Electron transport</keyword>
<keyword id="KW-0472">Membrane</keyword>
<keyword id="KW-0560">Oxidoreductase</keyword>
<keyword id="KW-0676">Redox-active center</keyword>
<keyword id="KW-0812">Transmembrane</keyword>
<keyword id="KW-1133">Transmembrane helix</keyword>
<keyword id="KW-0813">Transport</keyword>
<gene>
    <name evidence="1" type="primary">dsbB</name>
    <name type="ordered locus">SFV_1192</name>
</gene>
<proteinExistence type="inferred from homology"/>
<protein>
    <recommendedName>
        <fullName evidence="1">Disulfide bond formation protein B</fullName>
    </recommendedName>
    <alternativeName>
        <fullName evidence="1">Disulfide oxidoreductase</fullName>
    </alternativeName>
</protein>